<reference key="1">
    <citation type="journal article" date="2004" name="J. Infect. Dis.">
        <title>Progress toward characterization of the group A Streptococcus metagenome: complete genome sequence of a macrolide-resistant serotype M6 strain.</title>
        <authorList>
            <person name="Banks D.J."/>
            <person name="Porcella S.F."/>
            <person name="Barbian K.D."/>
            <person name="Beres S.B."/>
            <person name="Philips L.E."/>
            <person name="Voyich J.M."/>
            <person name="DeLeo F.R."/>
            <person name="Martin J.M."/>
            <person name="Somerville G.A."/>
            <person name="Musser J.M."/>
        </authorList>
    </citation>
    <scope>NUCLEOTIDE SEQUENCE [LARGE SCALE GENOMIC DNA]</scope>
    <source>
        <strain>ATCC BAA-946 / MGAS10394</strain>
    </source>
</reference>
<dbReference type="EC" id="2.3.1.180" evidence="1"/>
<dbReference type="EMBL" id="CP000003">
    <property type="protein sequence ID" value="AAT87623.1"/>
    <property type="molecule type" value="Genomic_DNA"/>
</dbReference>
<dbReference type="RefSeq" id="WP_011184873.1">
    <property type="nucleotide sequence ID" value="NC_006086.1"/>
</dbReference>
<dbReference type="SMR" id="Q5XAE0"/>
<dbReference type="KEGG" id="spa:M6_Spy1488"/>
<dbReference type="HOGENOM" id="CLU_039592_4_1_9"/>
<dbReference type="UniPathway" id="UPA00094"/>
<dbReference type="Proteomes" id="UP000001167">
    <property type="component" value="Chromosome"/>
</dbReference>
<dbReference type="GO" id="GO:0005737">
    <property type="term" value="C:cytoplasm"/>
    <property type="evidence" value="ECO:0007669"/>
    <property type="project" value="UniProtKB-SubCell"/>
</dbReference>
<dbReference type="GO" id="GO:0004315">
    <property type="term" value="F:3-oxoacyl-[acyl-carrier-protein] synthase activity"/>
    <property type="evidence" value="ECO:0007669"/>
    <property type="project" value="InterPro"/>
</dbReference>
<dbReference type="GO" id="GO:0033818">
    <property type="term" value="F:beta-ketoacyl-acyl-carrier-protein synthase III activity"/>
    <property type="evidence" value="ECO:0007669"/>
    <property type="project" value="UniProtKB-UniRule"/>
</dbReference>
<dbReference type="GO" id="GO:0006633">
    <property type="term" value="P:fatty acid biosynthetic process"/>
    <property type="evidence" value="ECO:0007669"/>
    <property type="project" value="UniProtKB-UniRule"/>
</dbReference>
<dbReference type="CDD" id="cd00830">
    <property type="entry name" value="KAS_III"/>
    <property type="match status" value="1"/>
</dbReference>
<dbReference type="Gene3D" id="3.40.47.10">
    <property type="match status" value="1"/>
</dbReference>
<dbReference type="HAMAP" id="MF_01815">
    <property type="entry name" value="FabH"/>
    <property type="match status" value="1"/>
</dbReference>
<dbReference type="InterPro" id="IPR013747">
    <property type="entry name" value="ACP_syn_III_C"/>
</dbReference>
<dbReference type="InterPro" id="IPR013751">
    <property type="entry name" value="ACP_syn_III_N"/>
</dbReference>
<dbReference type="InterPro" id="IPR004655">
    <property type="entry name" value="FabH"/>
</dbReference>
<dbReference type="InterPro" id="IPR016039">
    <property type="entry name" value="Thiolase-like"/>
</dbReference>
<dbReference type="NCBIfam" id="TIGR00747">
    <property type="entry name" value="fabH"/>
    <property type="match status" value="1"/>
</dbReference>
<dbReference type="NCBIfam" id="NF006829">
    <property type="entry name" value="PRK09352.1"/>
    <property type="match status" value="1"/>
</dbReference>
<dbReference type="PANTHER" id="PTHR43091">
    <property type="entry name" value="3-OXOACYL-[ACYL-CARRIER-PROTEIN] SYNTHASE"/>
    <property type="match status" value="1"/>
</dbReference>
<dbReference type="PANTHER" id="PTHR43091:SF1">
    <property type="entry name" value="BETA-KETOACYL-[ACYL-CARRIER-PROTEIN] SYNTHASE III, CHLOROPLASTIC"/>
    <property type="match status" value="1"/>
</dbReference>
<dbReference type="Pfam" id="PF08545">
    <property type="entry name" value="ACP_syn_III"/>
    <property type="match status" value="1"/>
</dbReference>
<dbReference type="Pfam" id="PF08541">
    <property type="entry name" value="ACP_syn_III_C"/>
    <property type="match status" value="1"/>
</dbReference>
<dbReference type="SUPFAM" id="SSF53901">
    <property type="entry name" value="Thiolase-like"/>
    <property type="match status" value="1"/>
</dbReference>
<name>FABH_STRP6</name>
<organism>
    <name type="scientific">Streptococcus pyogenes serotype M6 (strain ATCC BAA-946 / MGAS10394)</name>
    <dbReference type="NCBI Taxonomy" id="286636"/>
    <lineage>
        <taxon>Bacteria</taxon>
        <taxon>Bacillati</taxon>
        <taxon>Bacillota</taxon>
        <taxon>Bacilli</taxon>
        <taxon>Lactobacillales</taxon>
        <taxon>Streptococcaceae</taxon>
        <taxon>Streptococcus</taxon>
    </lineage>
</organism>
<keyword id="KW-0012">Acyltransferase</keyword>
<keyword id="KW-0963">Cytoplasm</keyword>
<keyword id="KW-0275">Fatty acid biosynthesis</keyword>
<keyword id="KW-0276">Fatty acid metabolism</keyword>
<keyword id="KW-0444">Lipid biosynthesis</keyword>
<keyword id="KW-0443">Lipid metabolism</keyword>
<keyword id="KW-0511">Multifunctional enzyme</keyword>
<keyword id="KW-0808">Transferase</keyword>
<protein>
    <recommendedName>
        <fullName evidence="1">Beta-ketoacyl-[acyl-carrier-protein] synthase III</fullName>
        <shortName evidence="1">Beta-ketoacyl-ACP synthase III</shortName>
        <shortName evidence="1">KAS III</shortName>
        <ecNumber evidence="1">2.3.1.180</ecNumber>
    </recommendedName>
    <alternativeName>
        <fullName evidence="1">3-oxoacyl-[acyl-carrier-protein] synthase 3</fullName>
    </alternativeName>
    <alternativeName>
        <fullName evidence="1">3-oxoacyl-[acyl-carrier-protein] synthase III</fullName>
    </alternativeName>
</protein>
<gene>
    <name evidence="1" type="primary">fabH</name>
    <name type="ordered locus">M6_Spy1488</name>
</gene>
<accession>Q5XAE0</accession>
<evidence type="ECO:0000255" key="1">
    <source>
        <dbReference type="HAMAP-Rule" id="MF_01815"/>
    </source>
</evidence>
<feature type="chain" id="PRO_0000110495" description="Beta-ketoacyl-[acyl-carrier-protein] synthase III">
    <location>
        <begin position="1"/>
        <end position="324"/>
    </location>
</feature>
<feature type="region of interest" description="ACP-binding" evidence="1">
    <location>
        <begin position="250"/>
        <end position="254"/>
    </location>
</feature>
<feature type="active site" evidence="1">
    <location>
        <position position="112"/>
    </location>
</feature>
<feature type="active site" evidence="1">
    <location>
        <position position="249"/>
    </location>
</feature>
<feature type="active site" evidence="1">
    <location>
        <position position="279"/>
    </location>
</feature>
<comment type="function">
    <text evidence="1">Catalyzes the condensation reaction of fatty acid synthesis by the addition to an acyl acceptor of two carbons from malonyl-ACP. Catalyzes the first condensation reaction which initiates fatty acid synthesis and may therefore play a role in governing the total rate of fatty acid production. Possesses both acetoacetyl-ACP synthase and acetyl transacylase activities. Its substrate specificity determines the biosynthesis of branched-chain and/or straight-chain of fatty acids.</text>
</comment>
<comment type="catalytic activity">
    <reaction evidence="1">
        <text>malonyl-[ACP] + acetyl-CoA + H(+) = 3-oxobutanoyl-[ACP] + CO2 + CoA</text>
        <dbReference type="Rhea" id="RHEA:12080"/>
        <dbReference type="Rhea" id="RHEA-COMP:9623"/>
        <dbReference type="Rhea" id="RHEA-COMP:9625"/>
        <dbReference type="ChEBI" id="CHEBI:15378"/>
        <dbReference type="ChEBI" id="CHEBI:16526"/>
        <dbReference type="ChEBI" id="CHEBI:57287"/>
        <dbReference type="ChEBI" id="CHEBI:57288"/>
        <dbReference type="ChEBI" id="CHEBI:78449"/>
        <dbReference type="ChEBI" id="CHEBI:78450"/>
        <dbReference type="EC" id="2.3.1.180"/>
    </reaction>
</comment>
<comment type="pathway">
    <text evidence="1">Lipid metabolism; fatty acid biosynthesis.</text>
</comment>
<comment type="subunit">
    <text evidence="1">Homodimer.</text>
</comment>
<comment type="subcellular location">
    <subcellularLocation>
        <location evidence="1">Cytoplasm</location>
    </subcellularLocation>
</comment>
<comment type="domain">
    <text evidence="1">The last Arg residue of the ACP-binding site is essential for the weak association between ACP/AcpP and FabH.</text>
</comment>
<comment type="similarity">
    <text evidence="1">Belongs to the thiolase-like superfamily. FabH family.</text>
</comment>
<proteinExistence type="inferred from homology"/>
<sequence length="324" mass="34847">MIFSKISQVAHYVPQQLVTNNDLASIMDTSHEWIFSRTGIAERHISRDEMTSDLAIQVADQLLTQSGLKANAIDFIIVATISPDATMPSTAAKVQAAIAATSAFAFDMTAACSGFVFALAMADKLIASGAYQNGMVIGAETLSKLVNWQDRATAVLFGDGAGGVLLEASKDKHVLAETLHTDGARCQSLISGETSLSSPYSIGKKAIATIQMDGRAIFDFAIRDVSKSILTLMAQSDITKDDIDYCLLHQANRRILDKIARKIDVPREKFLENMMRYGNTSAASIPILLSEAVQKGQIRLDGTQKILLSGFGGGLTWGSLIVKI</sequence>